<organism>
    <name type="scientific">Homo sapiens</name>
    <name type="common">Human</name>
    <dbReference type="NCBI Taxonomy" id="9606"/>
    <lineage>
        <taxon>Eukaryota</taxon>
        <taxon>Metazoa</taxon>
        <taxon>Chordata</taxon>
        <taxon>Craniata</taxon>
        <taxon>Vertebrata</taxon>
        <taxon>Euteleostomi</taxon>
        <taxon>Mammalia</taxon>
        <taxon>Eutheria</taxon>
        <taxon>Euarchontoglires</taxon>
        <taxon>Primates</taxon>
        <taxon>Haplorrhini</taxon>
        <taxon>Catarrhini</taxon>
        <taxon>Hominidae</taxon>
        <taxon>Homo</taxon>
    </lineage>
</organism>
<feature type="chain" id="PRO_0000150636" description="Olfactory receptor 6Q1">
    <location>
        <begin position="1"/>
        <end position="317"/>
    </location>
</feature>
<feature type="topological domain" description="Extracellular" evidence="1">
    <location>
        <begin position="1"/>
        <end position="27"/>
    </location>
</feature>
<feature type="transmembrane region" description="Helical; Name=1" evidence="1">
    <location>
        <begin position="28"/>
        <end position="48"/>
    </location>
</feature>
<feature type="topological domain" description="Cytoplasmic" evidence="1">
    <location>
        <begin position="49"/>
        <end position="56"/>
    </location>
</feature>
<feature type="transmembrane region" description="Helical; Name=2" evidence="1">
    <location>
        <begin position="57"/>
        <end position="77"/>
    </location>
</feature>
<feature type="topological domain" description="Extracellular" evidence="1">
    <location>
        <begin position="78"/>
        <end position="103"/>
    </location>
</feature>
<feature type="transmembrane region" description="Helical; Name=3" evidence="1">
    <location>
        <begin position="104"/>
        <end position="124"/>
    </location>
</feature>
<feature type="topological domain" description="Cytoplasmic" evidence="1">
    <location>
        <begin position="125"/>
        <end position="143"/>
    </location>
</feature>
<feature type="transmembrane region" description="Helical; Name=4" evidence="1">
    <location>
        <begin position="144"/>
        <end position="164"/>
    </location>
</feature>
<feature type="topological domain" description="Extracellular" evidence="1">
    <location>
        <begin position="165"/>
        <end position="201"/>
    </location>
</feature>
<feature type="transmembrane region" description="Helical; Name=5" evidence="1">
    <location>
        <begin position="202"/>
        <end position="221"/>
    </location>
</feature>
<feature type="topological domain" description="Cytoplasmic" evidence="1">
    <location>
        <begin position="222"/>
        <end position="241"/>
    </location>
</feature>
<feature type="transmembrane region" description="Helical; Name=6" evidence="1">
    <location>
        <begin position="242"/>
        <end position="262"/>
    </location>
</feature>
<feature type="topological domain" description="Extracellular" evidence="1">
    <location>
        <begin position="263"/>
        <end position="275"/>
    </location>
</feature>
<feature type="transmembrane region" description="Helical; Name=7" evidence="1">
    <location>
        <begin position="276"/>
        <end position="296"/>
    </location>
</feature>
<feature type="topological domain" description="Cytoplasmic" evidence="1">
    <location>
        <begin position="297"/>
        <end position="317"/>
    </location>
</feature>
<feature type="glycosylation site" description="N-linked (GlcNAc...) asparagine" evidence="1">
    <location>
        <position position="7"/>
    </location>
</feature>
<feature type="glycosylation site" description="N-linked (GlcNAc...) asparagine" evidence="1">
    <location>
        <position position="95"/>
    </location>
</feature>
<feature type="disulfide bond" evidence="2">
    <location>
        <begin position="101"/>
        <end position="193"/>
    </location>
</feature>
<feature type="sequence variant" id="VAR_064742" description="Found in a renal cell carcinoma sample; somatic mutation." evidence="3">
    <original>F</original>
    <variation>I</variation>
    <location>
        <position position="172"/>
    </location>
</feature>
<feature type="sequence variant" id="VAR_057561" description="In dbSNP:rs1374570.">
    <original>G</original>
    <variation>A</variation>
    <location>
        <position position="316"/>
    </location>
</feature>
<feature type="sequence conflict" description="In Ref. 1; BAC05958, 3; AAI51148 and 4; AAK95094." evidence="4" ref="1 3 4">
    <original>D</original>
    <variation>G</variation>
    <location>
        <position position="100"/>
    </location>
</feature>
<feature type="sequence conflict" description="In Ref. 1; BAC05958, 3; AAI51148 and 4; AAK95094." evidence="4" ref="1 3 4">
    <original>Y</original>
    <variation>C</variation>
    <location>
        <position position="173"/>
    </location>
</feature>
<name>OR6Q1_HUMAN</name>
<gene>
    <name type="primary">OR6Q1</name>
</gene>
<accession>Q8NGQ2</accession>
<accession>B9EKW1</accession>
<accession>Q6IFH1</accession>
<accession>Q96R34</accession>
<reference key="1">
    <citation type="submission" date="2001-07" db="EMBL/GenBank/DDBJ databases">
        <title>Genome-wide discovery and analysis of human seven transmembrane helix receptor genes.</title>
        <authorList>
            <person name="Suwa M."/>
            <person name="Sato T."/>
            <person name="Okouchi I."/>
            <person name="Arita M."/>
            <person name="Futami K."/>
            <person name="Matsumoto S."/>
            <person name="Tsutsumi S."/>
            <person name="Aburatani H."/>
            <person name="Asai K."/>
            <person name="Akiyama Y."/>
        </authorList>
    </citation>
    <scope>NUCLEOTIDE SEQUENCE [GENOMIC DNA]</scope>
</reference>
<reference key="2">
    <citation type="journal article" date="2006" name="Nature">
        <title>Human chromosome 11 DNA sequence and analysis including novel gene identification.</title>
        <authorList>
            <person name="Taylor T.D."/>
            <person name="Noguchi H."/>
            <person name="Totoki Y."/>
            <person name="Toyoda A."/>
            <person name="Kuroki Y."/>
            <person name="Dewar K."/>
            <person name="Lloyd C."/>
            <person name="Itoh T."/>
            <person name="Takeda T."/>
            <person name="Kim D.-W."/>
            <person name="She X."/>
            <person name="Barlow K.F."/>
            <person name="Bloom T."/>
            <person name="Bruford E."/>
            <person name="Chang J.L."/>
            <person name="Cuomo C.A."/>
            <person name="Eichler E."/>
            <person name="FitzGerald M.G."/>
            <person name="Jaffe D.B."/>
            <person name="LaButti K."/>
            <person name="Nicol R."/>
            <person name="Park H.-S."/>
            <person name="Seaman C."/>
            <person name="Sougnez C."/>
            <person name="Yang X."/>
            <person name="Zimmer A.R."/>
            <person name="Zody M.C."/>
            <person name="Birren B.W."/>
            <person name="Nusbaum C."/>
            <person name="Fujiyama A."/>
            <person name="Hattori M."/>
            <person name="Rogers J."/>
            <person name="Lander E.S."/>
            <person name="Sakaki Y."/>
        </authorList>
    </citation>
    <scope>NUCLEOTIDE SEQUENCE [LARGE SCALE GENOMIC DNA]</scope>
</reference>
<reference key="3">
    <citation type="journal article" date="2004" name="Genome Res.">
        <title>The status, quality, and expansion of the NIH full-length cDNA project: the Mammalian Gene Collection (MGC).</title>
        <authorList>
            <consortium name="The MGC Project Team"/>
        </authorList>
    </citation>
    <scope>NUCLEOTIDE SEQUENCE [LARGE SCALE MRNA]</scope>
    <source>
        <tissue>Testis</tissue>
    </source>
</reference>
<reference key="4">
    <citation type="journal article" date="2002" name="Genomics">
        <title>DEFOG: a practical scheme for deciphering families of genes.</title>
        <authorList>
            <person name="Fuchs T."/>
            <person name="Malecova B."/>
            <person name="Linhart C."/>
            <person name="Sharan R."/>
            <person name="Khen M."/>
            <person name="Herwig R."/>
            <person name="Shmulevich D."/>
            <person name="Elkon R."/>
            <person name="Steinfath M."/>
            <person name="O'Brien J.K."/>
            <person name="Radelof U."/>
            <person name="Lehrach H."/>
            <person name="Lancet D."/>
            <person name="Shamir R."/>
        </authorList>
    </citation>
    <scope>NUCLEOTIDE SEQUENCE [GENOMIC DNA] OF 70-287</scope>
</reference>
<reference key="5">
    <citation type="journal article" date="2004" name="Proc. Natl. Acad. Sci. U.S.A.">
        <title>The human olfactory receptor gene family.</title>
        <authorList>
            <person name="Malnic B."/>
            <person name="Godfrey P.A."/>
            <person name="Buck L.B."/>
        </authorList>
    </citation>
    <scope>IDENTIFICATION</scope>
</reference>
<reference key="6">
    <citation type="journal article" date="2004" name="Proc. Natl. Acad. Sci. U.S.A.">
        <authorList>
            <person name="Malnic B."/>
            <person name="Godfrey P.A."/>
            <person name="Buck L.B."/>
        </authorList>
    </citation>
    <scope>ERRATUM OF PUBMED:14983052</scope>
</reference>
<reference key="7">
    <citation type="journal article" date="2003" name="Nat. Genet.">
        <title>Different noses for different people.</title>
        <authorList>
            <person name="Menashe I."/>
            <person name="Man O."/>
            <person name="Lancet D."/>
            <person name="Gilad Y."/>
        </authorList>
    </citation>
    <scope>POLYMORPHISM</scope>
</reference>
<reference key="8">
    <citation type="journal article" date="2011" name="Nature">
        <title>Exome sequencing identifies frequent mutation of the SWI/SNF complex gene PBRM1 in renal carcinoma.</title>
        <authorList>
            <person name="Varela I."/>
            <person name="Tarpey P."/>
            <person name="Raine K."/>
            <person name="Huang D."/>
            <person name="Ong C.K."/>
            <person name="Stephens P."/>
            <person name="Davies H."/>
            <person name="Jones D."/>
            <person name="Lin M.L."/>
            <person name="Teague J."/>
            <person name="Bignell G."/>
            <person name="Butler A."/>
            <person name="Cho J."/>
            <person name="Dalgliesh G.L."/>
            <person name="Galappaththige D."/>
            <person name="Greenman C."/>
            <person name="Hardy C."/>
            <person name="Jia M."/>
            <person name="Latimer C."/>
            <person name="Lau K.W."/>
            <person name="Marshall J."/>
            <person name="McLaren S."/>
            <person name="Menzies A."/>
            <person name="Mudie L."/>
            <person name="Stebbings L."/>
            <person name="Largaespada D.A."/>
            <person name="Wessels L.F.A."/>
            <person name="Richard S."/>
            <person name="Kahnoski R.J."/>
            <person name="Anema J."/>
            <person name="Tuveson D.A."/>
            <person name="Perez-Mancera P.A."/>
            <person name="Mustonen V."/>
            <person name="Fischer A."/>
            <person name="Adams D.J."/>
            <person name="Rust A."/>
            <person name="Chan-On W."/>
            <person name="Subimerb C."/>
            <person name="Dykema K."/>
            <person name="Furge K."/>
            <person name="Campbell P.J."/>
            <person name="Teh B.T."/>
            <person name="Stratton M.R."/>
            <person name="Futreal P.A."/>
        </authorList>
    </citation>
    <scope>VARIANT ILE-172</scope>
</reference>
<proteinExistence type="evidence at transcript level"/>
<comment type="function">
    <text evidence="4">Odorant receptor.</text>
</comment>
<comment type="subcellular location">
    <subcellularLocation>
        <location>Cell membrane</location>
        <topology>Multi-pass membrane protein</topology>
    </subcellularLocation>
</comment>
<comment type="polymorphism">
    <text>A single nucleotide deletion at position Leu-229 in the gene coding for this protein is responsible for functional diversity thus producing a pseudogene. The deletion is more frequent in African-Americans than in non-Africans.</text>
</comment>
<comment type="similarity">
    <text evidence="2">Belongs to the G-protein coupled receptor 1 family.</text>
</comment>
<comment type="online information" name="Human Olfactory Receptor Data Exploratorium (HORDE)">
    <link uri="http://genome.weizmann.ac.il/horde/card/index/symbol:OR6Q1"/>
</comment>
<protein>
    <recommendedName>
        <fullName>Olfactory receptor 6Q1</fullName>
    </recommendedName>
    <alternativeName>
        <fullName>Olfactory receptor OR11-226</fullName>
    </alternativeName>
</protein>
<keyword id="KW-1003">Cell membrane</keyword>
<keyword id="KW-1015">Disulfide bond</keyword>
<keyword id="KW-0297">G-protein coupled receptor</keyword>
<keyword id="KW-0325">Glycoprotein</keyword>
<keyword id="KW-0472">Membrane</keyword>
<keyword id="KW-0552">Olfaction</keyword>
<keyword id="KW-0675">Receptor</keyword>
<keyword id="KW-1185">Reference proteome</keyword>
<keyword id="KW-0716">Sensory transduction</keyword>
<keyword id="KW-0807">Transducer</keyword>
<keyword id="KW-0812">Transmembrane</keyword>
<keyword id="KW-1133">Transmembrane helix</keyword>
<dbReference type="EMBL" id="AB065737">
    <property type="protein sequence ID" value="BAC05958.1"/>
    <property type="molecule type" value="Genomic_DNA"/>
</dbReference>
<dbReference type="EMBL" id="AP003401">
    <property type="status" value="NOT_ANNOTATED_CDS"/>
    <property type="molecule type" value="Genomic_DNA"/>
</dbReference>
<dbReference type="EMBL" id="BC151147">
    <property type="protein sequence ID" value="AAI51148.1"/>
    <property type="molecule type" value="mRNA"/>
</dbReference>
<dbReference type="EMBL" id="AF399609">
    <property type="protein sequence ID" value="AAK95094.1"/>
    <property type="molecule type" value="Genomic_DNA"/>
</dbReference>
<dbReference type="EMBL" id="BK004291">
    <property type="protein sequence ID" value="DAA04689.1"/>
    <property type="molecule type" value="Genomic_DNA"/>
</dbReference>
<dbReference type="CCDS" id="CCDS31541.1"/>
<dbReference type="RefSeq" id="NP_001005186.2">
    <property type="nucleotide sequence ID" value="NM_001005186.2"/>
</dbReference>
<dbReference type="SMR" id="Q8NGQ2"/>
<dbReference type="BioGRID" id="128598">
    <property type="interactions" value="1"/>
</dbReference>
<dbReference type="FunCoup" id="Q8NGQ2">
    <property type="interactions" value="573"/>
</dbReference>
<dbReference type="STRING" id="9606.ENSP00000307734"/>
<dbReference type="GlyCosmos" id="Q8NGQ2">
    <property type="glycosylation" value="2 sites, No reported glycans"/>
</dbReference>
<dbReference type="GlyGen" id="Q8NGQ2">
    <property type="glycosylation" value="2 sites"/>
</dbReference>
<dbReference type="iPTMnet" id="Q8NGQ2"/>
<dbReference type="PhosphoSitePlus" id="Q8NGQ2"/>
<dbReference type="BioMuta" id="OR6Q1"/>
<dbReference type="DMDM" id="296439254"/>
<dbReference type="MassIVE" id="Q8NGQ2"/>
<dbReference type="PaxDb" id="9606-ENSP00000485678"/>
<dbReference type="Antibodypedia" id="78299">
    <property type="antibodies" value="112 antibodies from 19 providers"/>
</dbReference>
<dbReference type="DNASU" id="219952"/>
<dbReference type="Ensembl" id="ENST00000302622.4">
    <property type="protein sequence ID" value="ENSP00000307734.3"/>
    <property type="gene ID" value="ENSG00000279051.5"/>
</dbReference>
<dbReference type="GeneID" id="219952"/>
<dbReference type="KEGG" id="hsa:219952"/>
<dbReference type="MANE-Select" id="ENST00000302622.4">
    <property type="protein sequence ID" value="ENSP00000307734.3"/>
    <property type="RefSeq nucleotide sequence ID" value="NM_001005186.2"/>
    <property type="RefSeq protein sequence ID" value="NP_001005186.2"/>
</dbReference>
<dbReference type="UCSC" id="uc010rjz.2">
    <property type="organism name" value="human"/>
</dbReference>
<dbReference type="AGR" id="HGNC:15302"/>
<dbReference type="CTD" id="219952"/>
<dbReference type="GeneCards" id="OR6Q1"/>
<dbReference type="HGNC" id="HGNC:15302">
    <property type="gene designation" value="OR6Q1"/>
</dbReference>
<dbReference type="HPA" id="ENSG00000279051">
    <property type="expression patterns" value="Not detected"/>
</dbReference>
<dbReference type="neXtProt" id="NX_Q8NGQ2"/>
<dbReference type="PharmGKB" id="PA32602"/>
<dbReference type="VEuPathDB" id="HostDB:ENSG00000279051"/>
<dbReference type="eggNOG" id="ENOG502SI0W">
    <property type="taxonomic scope" value="Eukaryota"/>
</dbReference>
<dbReference type="GeneTree" id="ENSGT01090000260045"/>
<dbReference type="HOGENOM" id="CLU_012526_1_0_1"/>
<dbReference type="InParanoid" id="Q8NGQ2"/>
<dbReference type="OMA" id="SWGTCIR"/>
<dbReference type="OrthoDB" id="9830606at2759"/>
<dbReference type="PAN-GO" id="Q8NGQ2">
    <property type="GO annotations" value="0 GO annotations based on evolutionary models"/>
</dbReference>
<dbReference type="PhylomeDB" id="Q8NGQ2"/>
<dbReference type="TreeFam" id="TF337475"/>
<dbReference type="PathwayCommons" id="Q8NGQ2"/>
<dbReference type="Reactome" id="R-HSA-9752946">
    <property type="pathway name" value="Expression and translocation of olfactory receptors"/>
</dbReference>
<dbReference type="BioGRID-ORCS" id="219952">
    <property type="hits" value="10 hits in 739 CRISPR screens"/>
</dbReference>
<dbReference type="GeneWiki" id="OR6Q1"/>
<dbReference type="GenomeRNAi" id="219952"/>
<dbReference type="Pharos" id="Q8NGQ2">
    <property type="development level" value="Tdark"/>
</dbReference>
<dbReference type="PRO" id="PR:Q8NGQ2"/>
<dbReference type="Proteomes" id="UP000005640">
    <property type="component" value="Chromosome 11"/>
</dbReference>
<dbReference type="RNAct" id="Q8NGQ2">
    <property type="molecule type" value="protein"/>
</dbReference>
<dbReference type="Bgee" id="ENSG00000279051">
    <property type="expression patterns" value="Expressed in primordial germ cell in gonad"/>
</dbReference>
<dbReference type="ExpressionAtlas" id="Q8NGQ2">
    <property type="expression patterns" value="baseline and differential"/>
</dbReference>
<dbReference type="GO" id="GO:0005886">
    <property type="term" value="C:plasma membrane"/>
    <property type="evidence" value="ECO:0000318"/>
    <property type="project" value="GO_Central"/>
</dbReference>
<dbReference type="GO" id="GO:0004930">
    <property type="term" value="F:G protein-coupled receptor activity"/>
    <property type="evidence" value="ECO:0007669"/>
    <property type="project" value="UniProtKB-KW"/>
</dbReference>
<dbReference type="GO" id="GO:0004984">
    <property type="term" value="F:olfactory receptor activity"/>
    <property type="evidence" value="ECO:0000318"/>
    <property type="project" value="GO_Central"/>
</dbReference>
<dbReference type="GO" id="GO:0050911">
    <property type="term" value="P:detection of chemical stimulus involved in sensory perception of smell"/>
    <property type="evidence" value="ECO:0000318"/>
    <property type="project" value="GO_Central"/>
</dbReference>
<dbReference type="CDD" id="cd13954">
    <property type="entry name" value="7tmA_OR"/>
    <property type="match status" value="1"/>
</dbReference>
<dbReference type="FunFam" id="1.20.1070.10:FF:000015">
    <property type="entry name" value="Olfactory receptor"/>
    <property type="match status" value="1"/>
</dbReference>
<dbReference type="Gene3D" id="1.20.1070.10">
    <property type="entry name" value="Rhodopsin 7-helix transmembrane proteins"/>
    <property type="match status" value="1"/>
</dbReference>
<dbReference type="InterPro" id="IPR000276">
    <property type="entry name" value="GPCR_Rhodpsn"/>
</dbReference>
<dbReference type="InterPro" id="IPR017452">
    <property type="entry name" value="GPCR_Rhodpsn_7TM"/>
</dbReference>
<dbReference type="InterPro" id="IPR000725">
    <property type="entry name" value="Olfact_rcpt"/>
</dbReference>
<dbReference type="InterPro" id="IPR050939">
    <property type="entry name" value="Olfactory_GPCR1"/>
</dbReference>
<dbReference type="PANTHER" id="PTHR24242">
    <property type="entry name" value="G-PROTEIN COUPLED RECEPTOR"/>
    <property type="match status" value="1"/>
</dbReference>
<dbReference type="PANTHER" id="PTHR24242:SF357">
    <property type="entry name" value="OLFACTORY RECEPTOR FAMILY 6 SUBFAMILY Q MEMBER 1 (GENE_PSEUDOGENE)"/>
    <property type="match status" value="1"/>
</dbReference>
<dbReference type="Pfam" id="PF13853">
    <property type="entry name" value="7tm_4"/>
    <property type="match status" value="1"/>
</dbReference>
<dbReference type="PRINTS" id="PR00237">
    <property type="entry name" value="GPCRRHODOPSN"/>
</dbReference>
<dbReference type="PRINTS" id="PR00245">
    <property type="entry name" value="OLFACTORYR"/>
</dbReference>
<dbReference type="SUPFAM" id="SSF81321">
    <property type="entry name" value="Family A G protein-coupled receptor-like"/>
    <property type="match status" value="1"/>
</dbReference>
<dbReference type="PROSITE" id="PS00237">
    <property type="entry name" value="G_PROTEIN_RECEP_F1_1"/>
    <property type="match status" value="1"/>
</dbReference>
<dbReference type="PROSITE" id="PS50262">
    <property type="entry name" value="G_PROTEIN_RECEP_F1_2"/>
    <property type="match status" value="1"/>
</dbReference>
<evidence type="ECO:0000255" key="1"/>
<evidence type="ECO:0000255" key="2">
    <source>
        <dbReference type="PROSITE-ProRule" id="PRU00521"/>
    </source>
</evidence>
<evidence type="ECO:0000269" key="3">
    <source>
    </source>
</evidence>
<evidence type="ECO:0000305" key="4"/>
<sequence length="317" mass="35736">MQPYTKNWTQVTEFVMMGFAGIHEAHLLFFILFLTMYLFTLVENLAIILVVGLDHRLRRPMYFFLTHLSCLEIWYTSVTVPKMLAGFIGVDGGKNISYADCLSQLFIFTFLGATECFLLAAMAYDRYVAICMPLHYGAFVSWGTCIRLAAACWLVGFLTPILPIYLLSQLTFYGPNVIDHFSCDASPLLALSCSDVTWKETVDFLVSLAVLLASSMVIAVSYGNIVWTLLHIRSAAERWKAFSTCAAHLTVVSLFYGTLFFMYVQTKVTSSINFNKVVSVFYSVVTPMLNPLIYSLRNKEVKGALGRVFSLNFWKGQ</sequence>